<organism>
    <name type="scientific">Staphylococcus epidermidis (strain ATCC 35984 / DSM 28319 / BCRC 17069 / CCUG 31568 / BM 3577 / RP62A)</name>
    <dbReference type="NCBI Taxonomy" id="176279"/>
    <lineage>
        <taxon>Bacteria</taxon>
        <taxon>Bacillati</taxon>
        <taxon>Bacillota</taxon>
        <taxon>Bacilli</taxon>
        <taxon>Bacillales</taxon>
        <taxon>Staphylococcaceae</taxon>
        <taxon>Staphylococcus</taxon>
    </lineage>
</organism>
<accession>Q5HLQ9</accession>
<feature type="chain" id="PRO_0000158470" description="Ribose-5-phosphate isomerase A">
    <location>
        <begin position="1"/>
        <end position="230"/>
    </location>
</feature>
<feature type="active site" description="Proton acceptor" evidence="1">
    <location>
        <position position="107"/>
    </location>
</feature>
<feature type="binding site" evidence="1">
    <location>
        <begin position="29"/>
        <end position="32"/>
    </location>
    <ligand>
        <name>substrate</name>
    </ligand>
</feature>
<feature type="binding site" evidence="1">
    <location>
        <begin position="85"/>
        <end position="88"/>
    </location>
    <ligand>
        <name>substrate</name>
    </ligand>
</feature>
<feature type="binding site" evidence="1">
    <location>
        <begin position="98"/>
        <end position="101"/>
    </location>
    <ligand>
        <name>substrate</name>
    </ligand>
</feature>
<feature type="binding site" evidence="1">
    <location>
        <position position="125"/>
    </location>
    <ligand>
        <name>substrate</name>
    </ligand>
</feature>
<evidence type="ECO:0000255" key="1">
    <source>
        <dbReference type="HAMAP-Rule" id="MF_00170"/>
    </source>
</evidence>
<proteinExistence type="inferred from homology"/>
<dbReference type="EC" id="5.3.1.6" evidence="1"/>
<dbReference type="EMBL" id="CP000029">
    <property type="protein sequence ID" value="AAW55266.1"/>
    <property type="molecule type" value="Genomic_DNA"/>
</dbReference>
<dbReference type="RefSeq" id="WP_001831586.1">
    <property type="nucleotide sequence ID" value="NC_002976.3"/>
</dbReference>
<dbReference type="SMR" id="Q5HLQ9"/>
<dbReference type="STRING" id="176279.SERP1924"/>
<dbReference type="KEGG" id="ser:SERP1924"/>
<dbReference type="eggNOG" id="COG0120">
    <property type="taxonomic scope" value="Bacteria"/>
</dbReference>
<dbReference type="HOGENOM" id="CLU_056590_1_1_9"/>
<dbReference type="UniPathway" id="UPA00115">
    <property type="reaction ID" value="UER00412"/>
</dbReference>
<dbReference type="Proteomes" id="UP000000531">
    <property type="component" value="Chromosome"/>
</dbReference>
<dbReference type="GO" id="GO:0005829">
    <property type="term" value="C:cytosol"/>
    <property type="evidence" value="ECO:0007669"/>
    <property type="project" value="TreeGrafter"/>
</dbReference>
<dbReference type="GO" id="GO:0004751">
    <property type="term" value="F:ribose-5-phosphate isomerase activity"/>
    <property type="evidence" value="ECO:0007669"/>
    <property type="project" value="UniProtKB-UniRule"/>
</dbReference>
<dbReference type="GO" id="GO:0006014">
    <property type="term" value="P:D-ribose metabolic process"/>
    <property type="evidence" value="ECO:0007669"/>
    <property type="project" value="TreeGrafter"/>
</dbReference>
<dbReference type="GO" id="GO:0009052">
    <property type="term" value="P:pentose-phosphate shunt, non-oxidative branch"/>
    <property type="evidence" value="ECO:0007669"/>
    <property type="project" value="UniProtKB-UniRule"/>
</dbReference>
<dbReference type="CDD" id="cd01398">
    <property type="entry name" value="RPI_A"/>
    <property type="match status" value="1"/>
</dbReference>
<dbReference type="FunFam" id="3.40.50.1360:FF:000001">
    <property type="entry name" value="Ribose-5-phosphate isomerase A"/>
    <property type="match status" value="1"/>
</dbReference>
<dbReference type="Gene3D" id="3.30.70.260">
    <property type="match status" value="1"/>
</dbReference>
<dbReference type="Gene3D" id="3.40.50.1360">
    <property type="match status" value="1"/>
</dbReference>
<dbReference type="HAMAP" id="MF_00170">
    <property type="entry name" value="Rib_5P_isom_A"/>
    <property type="match status" value="1"/>
</dbReference>
<dbReference type="InterPro" id="IPR037171">
    <property type="entry name" value="NagB/RpiA_transferase-like"/>
</dbReference>
<dbReference type="InterPro" id="IPR020672">
    <property type="entry name" value="Ribose5P_isomerase_typA_subgr"/>
</dbReference>
<dbReference type="InterPro" id="IPR004788">
    <property type="entry name" value="Ribose5P_isomerase_type_A"/>
</dbReference>
<dbReference type="NCBIfam" id="NF001924">
    <property type="entry name" value="PRK00702.1"/>
    <property type="match status" value="1"/>
</dbReference>
<dbReference type="NCBIfam" id="NF010585">
    <property type="entry name" value="PRK13978.1"/>
    <property type="match status" value="1"/>
</dbReference>
<dbReference type="NCBIfam" id="TIGR00021">
    <property type="entry name" value="rpiA"/>
    <property type="match status" value="1"/>
</dbReference>
<dbReference type="PANTHER" id="PTHR11934">
    <property type="entry name" value="RIBOSE-5-PHOSPHATE ISOMERASE"/>
    <property type="match status" value="1"/>
</dbReference>
<dbReference type="PANTHER" id="PTHR11934:SF0">
    <property type="entry name" value="RIBOSE-5-PHOSPHATE ISOMERASE"/>
    <property type="match status" value="1"/>
</dbReference>
<dbReference type="Pfam" id="PF06026">
    <property type="entry name" value="Rib_5-P_isom_A"/>
    <property type="match status" value="1"/>
</dbReference>
<dbReference type="SUPFAM" id="SSF75445">
    <property type="entry name" value="D-ribose-5-phosphate isomerase (RpiA), lid domain"/>
    <property type="match status" value="1"/>
</dbReference>
<dbReference type="SUPFAM" id="SSF100950">
    <property type="entry name" value="NagB/RpiA/CoA transferase-like"/>
    <property type="match status" value="1"/>
</dbReference>
<name>RPIA_STAEQ</name>
<reference key="1">
    <citation type="journal article" date="2005" name="J. Bacteriol.">
        <title>Insights on evolution of virulence and resistance from the complete genome analysis of an early methicillin-resistant Staphylococcus aureus strain and a biofilm-producing methicillin-resistant Staphylococcus epidermidis strain.</title>
        <authorList>
            <person name="Gill S.R."/>
            <person name="Fouts D.E."/>
            <person name="Archer G.L."/>
            <person name="Mongodin E.F."/>
            <person name="DeBoy R.T."/>
            <person name="Ravel J."/>
            <person name="Paulsen I.T."/>
            <person name="Kolonay J.F."/>
            <person name="Brinkac L.M."/>
            <person name="Beanan M.J."/>
            <person name="Dodson R.J."/>
            <person name="Daugherty S.C."/>
            <person name="Madupu R."/>
            <person name="Angiuoli S.V."/>
            <person name="Durkin A.S."/>
            <person name="Haft D.H."/>
            <person name="Vamathevan J.J."/>
            <person name="Khouri H."/>
            <person name="Utterback T.R."/>
            <person name="Lee C."/>
            <person name="Dimitrov G."/>
            <person name="Jiang L."/>
            <person name="Qin H."/>
            <person name="Weidman J."/>
            <person name="Tran K."/>
            <person name="Kang K.H."/>
            <person name="Hance I.R."/>
            <person name="Nelson K.E."/>
            <person name="Fraser C.M."/>
        </authorList>
    </citation>
    <scope>NUCLEOTIDE SEQUENCE [LARGE SCALE GENOMIC DNA]</scope>
    <source>
        <strain>ATCC 35984 / DSM 28319 / BCRC 17069 / CCUG 31568 / BM 3577 / RP62A</strain>
    </source>
</reference>
<sequence>MKDAKELKLMTLEDVLSQIENGMTIGIGTGSTIELLIPQIAELIQQKNYTITGVCTSNKTAFLAKELAMNIVDVNDVEKIDLAIDGADEVDSALNLIKGGGGALFREKVIDEMADRFVVVVDESKLVNYLGETFALPVEVDKFNWYQVAKKIERTYDIHVSRRVNEDVPFITDNGNYILDCSLQNRIPAYELHEFLIHLTGVLETGYFLDIADQVIVGTQEGVKILNKET</sequence>
<comment type="function">
    <text evidence="1">Catalyzes the reversible conversion of ribose-5-phosphate to ribulose 5-phosphate.</text>
</comment>
<comment type="catalytic activity">
    <reaction evidence="1">
        <text>aldehydo-D-ribose 5-phosphate = D-ribulose 5-phosphate</text>
        <dbReference type="Rhea" id="RHEA:14657"/>
        <dbReference type="ChEBI" id="CHEBI:58121"/>
        <dbReference type="ChEBI" id="CHEBI:58273"/>
        <dbReference type="EC" id="5.3.1.6"/>
    </reaction>
</comment>
<comment type="pathway">
    <text evidence="1">Carbohydrate degradation; pentose phosphate pathway; D-ribose 5-phosphate from D-ribulose 5-phosphate (non-oxidative stage): step 1/1.</text>
</comment>
<comment type="subunit">
    <text evidence="1">Homodimer.</text>
</comment>
<comment type="similarity">
    <text evidence="1">Belongs to the ribose 5-phosphate isomerase family.</text>
</comment>
<protein>
    <recommendedName>
        <fullName evidence="1">Ribose-5-phosphate isomerase A</fullName>
        <ecNumber evidence="1">5.3.1.6</ecNumber>
    </recommendedName>
    <alternativeName>
        <fullName evidence="1">Phosphoriboisomerase A</fullName>
        <shortName evidence="1">PRI</shortName>
    </alternativeName>
</protein>
<keyword id="KW-0413">Isomerase</keyword>
<keyword id="KW-1185">Reference proteome</keyword>
<gene>
    <name evidence="1" type="primary">rpiA</name>
    <name type="ordered locus">SERP1924</name>
</gene>